<feature type="chain" id="PRO_0000314307" description="Carboxy-S-adenosyl-L-methionine synthase">
    <location>
        <begin position="1"/>
        <end position="241"/>
    </location>
</feature>
<feature type="binding site" evidence="1">
    <location>
        <position position="38"/>
    </location>
    <ligand>
        <name>S-adenosyl-L-methionine</name>
        <dbReference type="ChEBI" id="CHEBI:59789"/>
    </ligand>
</feature>
<feature type="binding site" evidence="1">
    <location>
        <begin position="63"/>
        <end position="65"/>
    </location>
    <ligand>
        <name>S-adenosyl-L-methionine</name>
        <dbReference type="ChEBI" id="CHEBI:59789"/>
    </ligand>
</feature>
<feature type="binding site" evidence="1">
    <location>
        <begin position="88"/>
        <end position="89"/>
    </location>
    <ligand>
        <name>S-adenosyl-L-methionine</name>
        <dbReference type="ChEBI" id="CHEBI:59789"/>
    </ligand>
</feature>
<feature type="binding site" evidence="1">
    <location>
        <begin position="116"/>
        <end position="117"/>
    </location>
    <ligand>
        <name>S-adenosyl-L-methionine</name>
        <dbReference type="ChEBI" id="CHEBI:59789"/>
    </ligand>
</feature>
<feature type="binding site" evidence="1">
    <location>
        <position position="131"/>
    </location>
    <ligand>
        <name>S-adenosyl-L-methionine</name>
        <dbReference type="ChEBI" id="CHEBI:59789"/>
    </ligand>
</feature>
<feature type="binding site" evidence="1">
    <location>
        <position position="198"/>
    </location>
    <ligand>
        <name>S-adenosyl-L-methionine</name>
        <dbReference type="ChEBI" id="CHEBI:59789"/>
    </ligand>
</feature>
<reference key="1">
    <citation type="journal article" date="2008" name="J. Bacteriol.">
        <title>The complete genome sequence of Actinobacillus pleuropneumoniae L20 (serotype 5b).</title>
        <authorList>
            <person name="Foote S.J."/>
            <person name="Bosse J.T."/>
            <person name="Bouevitch A.B."/>
            <person name="Langford P.R."/>
            <person name="Young N.M."/>
            <person name="Nash J.H.E."/>
        </authorList>
    </citation>
    <scope>NUCLEOTIDE SEQUENCE [LARGE SCALE GENOMIC DNA]</scope>
    <source>
        <strain>L20</strain>
    </source>
</reference>
<dbReference type="EC" id="2.1.3.-" evidence="1"/>
<dbReference type="EMBL" id="CP000569">
    <property type="protein sequence ID" value="ABN73852.1"/>
    <property type="molecule type" value="Genomic_DNA"/>
</dbReference>
<dbReference type="RefSeq" id="WP_005597177.1">
    <property type="nucleotide sequence ID" value="NC_009053.1"/>
</dbReference>
<dbReference type="SMR" id="A3N0B6"/>
<dbReference type="STRING" id="416269.APL_0754"/>
<dbReference type="EnsemblBacteria" id="ABN73852">
    <property type="protein sequence ID" value="ABN73852"/>
    <property type="gene ID" value="APL_0754"/>
</dbReference>
<dbReference type="GeneID" id="48598935"/>
<dbReference type="KEGG" id="apl:APL_0754"/>
<dbReference type="eggNOG" id="COG2226">
    <property type="taxonomic scope" value="Bacteria"/>
</dbReference>
<dbReference type="HOGENOM" id="CLU_078475_0_0_6"/>
<dbReference type="Proteomes" id="UP000001432">
    <property type="component" value="Chromosome"/>
</dbReference>
<dbReference type="GO" id="GO:0016743">
    <property type="term" value="F:carboxyl- or carbamoyltransferase activity"/>
    <property type="evidence" value="ECO:0007669"/>
    <property type="project" value="UniProtKB-UniRule"/>
</dbReference>
<dbReference type="GO" id="GO:1904047">
    <property type="term" value="F:S-adenosyl-L-methionine binding"/>
    <property type="evidence" value="ECO:0007669"/>
    <property type="project" value="UniProtKB-UniRule"/>
</dbReference>
<dbReference type="GO" id="GO:0002098">
    <property type="term" value="P:tRNA wobble uridine modification"/>
    <property type="evidence" value="ECO:0007669"/>
    <property type="project" value="InterPro"/>
</dbReference>
<dbReference type="CDD" id="cd02440">
    <property type="entry name" value="AdoMet_MTases"/>
    <property type="match status" value="1"/>
</dbReference>
<dbReference type="Gene3D" id="3.40.50.150">
    <property type="entry name" value="Vaccinia Virus protein VP39"/>
    <property type="match status" value="1"/>
</dbReference>
<dbReference type="HAMAP" id="MF_01589">
    <property type="entry name" value="Cx_SAM_synthase"/>
    <property type="match status" value="1"/>
</dbReference>
<dbReference type="InterPro" id="IPR005271">
    <property type="entry name" value="CmoA"/>
</dbReference>
<dbReference type="InterPro" id="IPR041698">
    <property type="entry name" value="Methyltransf_25"/>
</dbReference>
<dbReference type="InterPro" id="IPR029063">
    <property type="entry name" value="SAM-dependent_MTases_sf"/>
</dbReference>
<dbReference type="NCBIfam" id="TIGR00740">
    <property type="entry name" value="carboxy-S-adenosyl-L-methionine synthase CmoA"/>
    <property type="match status" value="1"/>
</dbReference>
<dbReference type="NCBIfam" id="NF011995">
    <property type="entry name" value="PRK15451.1"/>
    <property type="match status" value="1"/>
</dbReference>
<dbReference type="PANTHER" id="PTHR43861:SF2">
    <property type="entry name" value="CARBOXY-S-ADENOSYL-L-METHIONINE SYNTHASE"/>
    <property type="match status" value="1"/>
</dbReference>
<dbReference type="PANTHER" id="PTHR43861">
    <property type="entry name" value="TRANS-ACONITATE 2-METHYLTRANSFERASE-RELATED"/>
    <property type="match status" value="1"/>
</dbReference>
<dbReference type="Pfam" id="PF13649">
    <property type="entry name" value="Methyltransf_25"/>
    <property type="match status" value="1"/>
</dbReference>
<dbReference type="PIRSF" id="PIRSF006325">
    <property type="entry name" value="MeTrfase_bac"/>
    <property type="match status" value="1"/>
</dbReference>
<dbReference type="SUPFAM" id="SSF53335">
    <property type="entry name" value="S-adenosyl-L-methionine-dependent methyltransferases"/>
    <property type="match status" value="1"/>
</dbReference>
<comment type="function">
    <text evidence="1">Catalyzes the conversion of S-adenosyl-L-methionine (SAM) to carboxy-S-adenosyl-L-methionine (Cx-SAM).</text>
</comment>
<comment type="catalytic activity">
    <reaction evidence="1">
        <text>prephenate + S-adenosyl-L-methionine = carboxy-S-adenosyl-L-methionine + 3-phenylpyruvate + H2O</text>
        <dbReference type="Rhea" id="RHEA:51692"/>
        <dbReference type="ChEBI" id="CHEBI:15377"/>
        <dbReference type="ChEBI" id="CHEBI:18005"/>
        <dbReference type="ChEBI" id="CHEBI:29934"/>
        <dbReference type="ChEBI" id="CHEBI:59789"/>
        <dbReference type="ChEBI" id="CHEBI:134278"/>
    </reaction>
</comment>
<comment type="subunit">
    <text evidence="1">Homodimer.</text>
</comment>
<comment type="similarity">
    <text evidence="1">Belongs to the class I-like SAM-binding methyltransferase superfamily. Cx-SAM synthase family.</text>
</comment>
<accession>A3N0B6</accession>
<proteinExistence type="inferred from homology"/>
<name>CMOA_ACTP2</name>
<protein>
    <recommendedName>
        <fullName evidence="1">Carboxy-S-adenosyl-L-methionine synthase</fullName>
        <shortName evidence="1">Cx-SAM synthase</shortName>
        <ecNumber evidence="1">2.1.3.-</ecNumber>
    </recommendedName>
</protein>
<evidence type="ECO:0000255" key="1">
    <source>
        <dbReference type="HAMAP-Rule" id="MF_01589"/>
    </source>
</evidence>
<keyword id="KW-1185">Reference proteome</keyword>
<keyword id="KW-0949">S-adenosyl-L-methionine</keyword>
<keyword id="KW-0808">Transferase</keyword>
<gene>
    <name evidence="1" type="primary">cmoA</name>
    <name type="ordered locus">APL_0754</name>
</gene>
<organism>
    <name type="scientific">Actinobacillus pleuropneumoniae serotype 5b (strain L20)</name>
    <dbReference type="NCBI Taxonomy" id="416269"/>
    <lineage>
        <taxon>Bacteria</taxon>
        <taxon>Pseudomonadati</taxon>
        <taxon>Pseudomonadota</taxon>
        <taxon>Gammaproteobacteria</taxon>
        <taxon>Pasteurellales</taxon>
        <taxon>Pasteurellaceae</taxon>
        <taxon>Actinobacillus</taxon>
    </lineage>
</organism>
<sequence>MNKDTIFSAPIEKLGDFTFDESVAEVFPDMIQRSVPGYSNIITAIGMLAQRFVTEGSQVYDLGCSRGAGILSIRRNLQTNQVKIIGVDNSQPMVERCRSHINAYHSEVPVEILCDDIRHIEIKNASMVVLNFTLQFLPRADRLELLTKIYQGLNPNGILVLSEKFTFENQVMNELLIDLHHTFKRANGYSELEVSQKRTALENVMLTDSIETHKDRLKQAGFSQIELWFQCFNFGSMIAVK</sequence>